<protein>
    <recommendedName>
        <fullName evidence="13">MFS-type transporter pigP</fullName>
    </recommendedName>
    <alternativeName>
        <fullName evidence="13">Azaphilone pigments biosynthesis cluster protein P</fullName>
    </alternativeName>
</protein>
<dbReference type="EMBL" id="KX290845">
    <property type="protein sequence ID" value="ANS12245.1"/>
    <property type="molecule type" value="mRNA"/>
</dbReference>
<dbReference type="EMBL" id="MK764691">
    <property type="protein sequence ID" value="QGA67180.1"/>
    <property type="molecule type" value="Genomic_DNA"/>
</dbReference>
<dbReference type="SMR" id="A0A2Z1U8L7"/>
<dbReference type="GO" id="GO:0005886">
    <property type="term" value="C:plasma membrane"/>
    <property type="evidence" value="ECO:0007669"/>
    <property type="project" value="UniProtKB-SubCell"/>
</dbReference>
<dbReference type="GO" id="GO:0031409">
    <property type="term" value="F:pigment binding"/>
    <property type="evidence" value="ECO:0007669"/>
    <property type="project" value="UniProtKB-KW"/>
</dbReference>
<dbReference type="GO" id="GO:0022857">
    <property type="term" value="F:transmembrane transporter activity"/>
    <property type="evidence" value="ECO:0007669"/>
    <property type="project" value="InterPro"/>
</dbReference>
<dbReference type="CDD" id="cd17502">
    <property type="entry name" value="MFS_Azr1_MDR_like"/>
    <property type="match status" value="1"/>
</dbReference>
<dbReference type="FunFam" id="1.20.1250.20:FF:000196">
    <property type="entry name" value="MFS toxin efflux pump (AflT)"/>
    <property type="match status" value="1"/>
</dbReference>
<dbReference type="FunFam" id="1.20.1720.10:FF:000012">
    <property type="entry name" value="MFS toxin efflux pump (AflT)"/>
    <property type="match status" value="1"/>
</dbReference>
<dbReference type="Gene3D" id="1.20.1250.20">
    <property type="entry name" value="MFS general substrate transporter like domains"/>
    <property type="match status" value="2"/>
</dbReference>
<dbReference type="InterPro" id="IPR011701">
    <property type="entry name" value="MFS"/>
</dbReference>
<dbReference type="InterPro" id="IPR020846">
    <property type="entry name" value="MFS_dom"/>
</dbReference>
<dbReference type="InterPro" id="IPR036259">
    <property type="entry name" value="MFS_trans_sf"/>
</dbReference>
<dbReference type="PANTHER" id="PTHR23501">
    <property type="entry name" value="MAJOR FACILITATOR SUPERFAMILY"/>
    <property type="match status" value="1"/>
</dbReference>
<dbReference type="PANTHER" id="PTHR23501:SF193">
    <property type="entry name" value="MULTIDRUG TRANSPORTER, PUTATIVE (AFU_ORTHOLOGUE AFUA_8G00940)-RELATED"/>
    <property type="match status" value="1"/>
</dbReference>
<dbReference type="Pfam" id="PF07690">
    <property type="entry name" value="MFS_1"/>
    <property type="match status" value="1"/>
</dbReference>
<dbReference type="PRINTS" id="PR01036">
    <property type="entry name" value="TCRTETB"/>
</dbReference>
<dbReference type="SUPFAM" id="SSF103473">
    <property type="entry name" value="MFS general substrate transporter"/>
    <property type="match status" value="1"/>
</dbReference>
<dbReference type="PROSITE" id="PS50850">
    <property type="entry name" value="MFS"/>
    <property type="match status" value="1"/>
</dbReference>
<accession>A0A2Z1U8L7</accession>
<proteinExistence type="evidence at protein level"/>
<comment type="function">
    <text evidence="9 10 11">MFS-type transporter; part of the gene cluster that mediates the biosynthesis of azaphilone pigments (MonAzPs), very widely used as food colorant.</text>
</comment>
<comment type="subcellular location">
    <subcellularLocation>
        <location evidence="15">Cell membrane</location>
        <topology evidence="1">Multi-pass membrane protein</topology>
    </subcellularLocation>
</comment>
<comment type="induction">
    <text evidence="11">Expression is positively regulated by the azaphilone pigments (MonAzPs) gene cluster-specific transcription regulator pigB.</text>
</comment>
<comment type="disruption phenotype">
    <text evidence="11">Does not affect the production of azaphilone pigments (MonAzPs).</text>
</comment>
<comment type="biotechnology">
    <text evidence="4 5 6 7 8 12">As colorants, MonAzPs are widely used in various food products for centuries (PubMed:37087240). Moreover, MonAzPs also possess wide-ranging biological activities such as antibacterial activity, preventing hypertension, lowering cholesterol levels, causing hypolipidemic effects, and displaying antiobesity and antitumor activities (PubMed:16283302, PubMed:16660141, PubMed:17191930, PubMed:20666456, PubMed:22562164).</text>
</comment>
<comment type="similarity">
    <text evidence="14">Belongs to the major facilitator superfamily. TCR/Tet family.</text>
</comment>
<organism>
    <name type="scientific">Monascus ruber</name>
    <name type="common">Mold</name>
    <dbReference type="NCBI Taxonomy" id="89489"/>
    <lineage>
        <taxon>Eukaryota</taxon>
        <taxon>Fungi</taxon>
        <taxon>Dikarya</taxon>
        <taxon>Ascomycota</taxon>
        <taxon>Pezizomycotina</taxon>
        <taxon>Eurotiomycetes</taxon>
        <taxon>Eurotiomycetidae</taxon>
        <taxon>Eurotiales</taxon>
        <taxon>Aspergillaceae</taxon>
        <taxon>Monascus</taxon>
    </lineage>
</organism>
<sequence length="570" mass="60915">MASTSNTDRVIDAGMIKKAHPEQTPPDVSHEGDVATEKGDSDGVEQAAPTGPTDGTPWVTGIKLVMIMSGITLVCFLMLLDTSIISTATPRITSQFHSLPDVGWYGSAYLLASASLVPLTGKIYQNFNTKWSFVSFFAVFELGSLLCGVATSSKMLIVGRAVAGMGGSGIQNGAFTIIAGCVPMQRRPALTGLLMGFAQLGIVIGPLIGGAFTQYTTWRWCFYINLPIGAVVGLLLFFVHIPEQLPKPKGISVVHIILRKLDLVGFVLFAPAAVQFLLALQYGGNKYAWNSSVVIGLFCGAGATFVCFILWEWYKGDDAMIPYSMICRQTVWTSCVVYGFLMATLLVASYYLPIYFQAIKGVNAMLSGVYILPSILSQSALAIISGALVGRFGYYLPWSLAGGIVSSVGNGLLTTFTPSTSVGKWIGYQILLGAGRGAGLQMPIIAAQNNLPPPLIPVAMALIMFCQSFFGSTFLSYADVIFTNSLRNKLKEYAPEVPPESIIVAGATAFRKAVPADQLPGVLKAYSKSVDYVFYLAVGAAVATFVFSCGMGWKDIRGNEPPQPSGDEKV</sequence>
<feature type="chain" id="PRO_0000460217" description="MFS-type transporter pigP">
    <location>
        <begin position="1"/>
        <end position="570"/>
    </location>
</feature>
<feature type="transmembrane region" description="Helical" evidence="1">
    <location>
        <begin position="65"/>
        <end position="85"/>
    </location>
</feature>
<feature type="transmembrane region" description="Helical" evidence="1">
    <location>
        <begin position="99"/>
        <end position="119"/>
    </location>
</feature>
<feature type="transmembrane region" description="Helical" evidence="1">
    <location>
        <begin position="131"/>
        <end position="151"/>
    </location>
</feature>
<feature type="transmembrane region" description="Helical" evidence="1">
    <location>
        <begin position="162"/>
        <end position="182"/>
    </location>
</feature>
<feature type="transmembrane region" description="Helical" evidence="1">
    <location>
        <begin position="192"/>
        <end position="212"/>
    </location>
</feature>
<feature type="transmembrane region" description="Helical" evidence="1">
    <location>
        <begin position="221"/>
        <end position="241"/>
    </location>
</feature>
<feature type="transmembrane region" description="Helical" evidence="1">
    <location>
        <begin position="263"/>
        <end position="283"/>
    </location>
</feature>
<feature type="transmembrane region" description="Helical" evidence="1">
    <location>
        <begin position="293"/>
        <end position="313"/>
    </location>
</feature>
<feature type="transmembrane region" description="Helical" evidence="1">
    <location>
        <begin position="336"/>
        <end position="356"/>
    </location>
</feature>
<feature type="transmembrane region" description="Helical" evidence="1">
    <location>
        <begin position="369"/>
        <end position="389"/>
    </location>
</feature>
<feature type="transmembrane region" description="Helical" evidence="1">
    <location>
        <begin position="392"/>
        <end position="412"/>
    </location>
</feature>
<feature type="transmembrane region" description="Helical" evidence="1">
    <location>
        <begin position="425"/>
        <end position="445"/>
    </location>
</feature>
<feature type="transmembrane region" description="Helical" evidence="1">
    <location>
        <begin position="455"/>
        <end position="475"/>
    </location>
</feature>
<feature type="transmembrane region" description="Helical" evidence="1">
    <location>
        <begin position="533"/>
        <end position="553"/>
    </location>
</feature>
<feature type="region of interest" description="Disordered" evidence="3">
    <location>
        <begin position="14"/>
        <end position="54"/>
    </location>
</feature>
<feature type="compositionally biased region" description="Basic and acidic residues" evidence="3">
    <location>
        <begin position="28"/>
        <end position="41"/>
    </location>
</feature>
<feature type="glycosylation site" description="N-linked (GlcNAc...) asparagine" evidence="2">
    <location>
        <position position="290"/>
    </location>
</feature>
<name>PIGP_MONRU</name>
<keyword id="KW-1003">Cell membrane</keyword>
<keyword id="KW-0325">Glycoprotein</keyword>
<keyword id="KW-0472">Membrane</keyword>
<keyword id="KW-0608">Pigment</keyword>
<keyword id="KW-0812">Transmembrane</keyword>
<keyword id="KW-1133">Transmembrane helix</keyword>
<keyword id="KW-0813">Transport</keyword>
<gene>
    <name evidence="13" type="primary">pigP</name>
</gene>
<reference key="1">
    <citation type="submission" date="2016-05" db="EMBL/GenBank/DDBJ databases">
        <authorList>
            <person name="Lavstsen T."/>
            <person name="Jespersen J.S."/>
        </authorList>
    </citation>
    <scope>NUCLEOTIDE SEQUENCE [MRNA]</scope>
    <source>
        <strain>M7</strain>
    </source>
</reference>
<reference key="2">
    <citation type="submission" date="2019-04" db="EMBL/GenBank/DDBJ databases">
        <authorList>
            <person name="Guo X."/>
            <person name="Chen M."/>
            <person name="Ma X."/>
        </authorList>
    </citation>
    <scope>NUCLEOTIDE SEQUENCE [GENOMIC DNA]</scope>
    <source>
        <strain>CGMCC 3.19587</strain>
    </source>
</reference>
<reference key="3">
    <citation type="journal article" date="1977" name="Plant Physiol.">
        <title>Pigmentation and antibacterial activity of fast neutron- and X-ray-induced strains of Monascus purpureus went.</title>
        <authorList>
            <person name="Wong H.C."/>
            <person name="Bau Y.S."/>
        </authorList>
    </citation>
    <scope>BIOTECHNOLOGY</scope>
</reference>
<reference key="4">
    <citation type="journal article" date="2005" name="Chem. Biodivers.">
        <title>Anti-tumor-initiating effects of monascin, an azaphilonoid pigment from the extract of Monascus pilosus fermented rice (red-mold rice).</title>
        <authorList>
            <person name="Akihisa T."/>
            <person name="Tokuda H."/>
            <person name="Ukiya M."/>
            <person name="Kiyota A."/>
            <person name="Yasukawa K."/>
            <person name="Sakamoto N."/>
            <person name="Kimura Y."/>
            <person name="Suzuki T."/>
            <person name="Takayasu J."/>
            <person name="Nishino H."/>
        </authorList>
    </citation>
    <scope>BIOTECHNOLOGY</scope>
</reference>
<reference key="5">
    <citation type="journal article" date="2006" name="Appl. Microbiol. Biotechnol.">
        <title>In vivo hypolipidemic effects and safety of low dosage Monascus powder in a hamster model of hyperlipidemia.</title>
        <authorList>
            <person name="Lee C.L."/>
            <person name="Tsai T.Y."/>
            <person name="Wang J.J."/>
            <person name="Pan T.M."/>
        </authorList>
    </citation>
    <scope>BIOTECHNOLOGY</scope>
</reference>
<reference key="6">
    <citation type="journal article" date="2010" name="J. Agric. Food Chem.">
        <title>Monascin and ankaflavin act as novel hypolipidemic and high-density lipoprotein cholesterol-raising agents in red mold dioscorea.</title>
        <authorList>
            <person name="Lee C.L."/>
            <person name="Kung Y.H."/>
            <person name="Wu C.L."/>
            <person name="Hsu Y.W."/>
            <person name="Pan T.M."/>
        </authorList>
    </citation>
    <scope>BIOTECHNOLOGY</scope>
</reference>
<reference key="7">
    <citation type="journal article" date="2012" name="Appl. Microbiol. Biotechnol.">
        <title>Development of Monascus fermentation technology for high hypolipidemic effect.</title>
        <authorList>
            <person name="Lee C.L."/>
            <person name="Pan T.M."/>
        </authorList>
    </citation>
    <scope>BIOTECHNOLOGY</scope>
</reference>
<reference key="8">
    <citation type="journal article" date="2016" name="Appl. Microbiol. Biotechnol.">
        <title>Identification and role analysis of an intermediate produced by a polygenic mutant of Monascus pigments cluster in Monascus ruber M7.</title>
        <authorList>
            <person name="Liu J."/>
            <person name="Zhou Y."/>
            <person name="Yi T."/>
            <person name="Zhao M."/>
            <person name="Xie N."/>
            <person name="Lei M."/>
            <person name="Liu Q."/>
            <person name="Shao Y."/>
            <person name="Chen F."/>
        </authorList>
    </citation>
    <scope>FUNCTION</scope>
</reference>
<reference key="9">
    <citation type="journal article" date="2017" name="Chem. Sci.">
        <title>Orange, red, yellow: biosynthesis of azaphilone pigments in Monascus fungi.</title>
        <authorList>
            <person name="Chen W."/>
            <person name="Chen R."/>
            <person name="Liu Q."/>
            <person name="He Y."/>
            <person name="He K."/>
            <person name="Ding X."/>
            <person name="Kang L."/>
            <person name="Guo X."/>
            <person name="Xie N."/>
            <person name="Zhou Y."/>
            <person name="Lu Y."/>
            <person name="Cox R.J."/>
            <person name="Molnar I."/>
            <person name="Li M."/>
            <person name="Shao Y."/>
            <person name="Chen F."/>
        </authorList>
    </citation>
    <scope>FUNCTION</scope>
</reference>
<reference key="10">
    <citation type="journal article" date="2021" name="Front. Microbiol.">
        <title>An integrated approach to determine the boundaries of the azaphilone pigment biosynthetic gene cluster of Monascus ruber M7 gown on potato dextrose agar.</title>
        <authorList>
            <person name="Liu Q."/>
            <person name="Zhong S."/>
            <person name="Wang X."/>
            <person name="Gao S."/>
            <person name="Yang X."/>
            <person name="Chen F."/>
            <person name="Molnar I."/>
        </authorList>
    </citation>
    <scope>FUNCTION</scope>
    <scope>DISRUPTION PHENOTYPE</scope>
    <scope>INDUCTION</scope>
</reference>
<reference key="11">
    <citation type="journal article" date="2023" name="Food Res. Intern.">
        <title>Improved natural food colorant production in the filamentous fungus Monascus ruber using CRISPR-based engineering.</title>
        <authorList>
            <person name="Ree Yoon H."/>
            <person name="Han S."/>
            <person name="Chul Shin S."/>
            <person name="Cheong Yeom S."/>
            <person name="Jin Kim H."/>
        </authorList>
    </citation>
    <scope>BIOTECHNOLOGY</scope>
</reference>
<evidence type="ECO:0000255" key="1"/>
<evidence type="ECO:0000255" key="2">
    <source>
        <dbReference type="PROSITE-ProRule" id="PRU00498"/>
    </source>
</evidence>
<evidence type="ECO:0000256" key="3">
    <source>
        <dbReference type="SAM" id="MobiDB-lite"/>
    </source>
</evidence>
<evidence type="ECO:0000269" key="4">
    <source>
    </source>
</evidence>
<evidence type="ECO:0000269" key="5">
    <source>
    </source>
</evidence>
<evidence type="ECO:0000269" key="6">
    <source>
    </source>
</evidence>
<evidence type="ECO:0000269" key="7">
    <source>
    </source>
</evidence>
<evidence type="ECO:0000269" key="8">
    <source>
    </source>
</evidence>
<evidence type="ECO:0000269" key="9">
    <source>
    </source>
</evidence>
<evidence type="ECO:0000269" key="10">
    <source>
    </source>
</evidence>
<evidence type="ECO:0000269" key="11">
    <source>
    </source>
</evidence>
<evidence type="ECO:0000269" key="12">
    <source>
    </source>
</evidence>
<evidence type="ECO:0000303" key="13">
    <source>
    </source>
</evidence>
<evidence type="ECO:0000305" key="14"/>
<evidence type="ECO:0000305" key="15">
    <source>
    </source>
</evidence>